<evidence type="ECO:0000255" key="1">
    <source>
        <dbReference type="HAMAP-Rule" id="MF_00914"/>
    </source>
</evidence>
<proteinExistence type="inferred from homology"/>
<feature type="chain" id="PRO_0000415621" description="L-alanine exporter AlaE">
    <location>
        <begin position="1"/>
        <end position="153"/>
    </location>
</feature>
<feature type="transmembrane region" description="Helical" evidence="1">
    <location>
        <begin position="16"/>
        <end position="36"/>
    </location>
</feature>
<feature type="transmembrane region" description="Helical" evidence="1">
    <location>
        <begin position="42"/>
        <end position="62"/>
    </location>
</feature>
<feature type="transmembrane region" description="Helical" evidence="1">
    <location>
        <begin position="86"/>
        <end position="106"/>
    </location>
</feature>
<feature type="transmembrane region" description="Helical" evidence="1">
    <location>
        <begin position="114"/>
        <end position="134"/>
    </location>
</feature>
<accession>C6C9J7</accession>
<keyword id="KW-0029">Amino-acid transport</keyword>
<keyword id="KW-0997">Cell inner membrane</keyword>
<keyword id="KW-1003">Cell membrane</keyword>
<keyword id="KW-0472">Membrane</keyword>
<keyword id="KW-0812">Transmembrane</keyword>
<keyword id="KW-1133">Transmembrane helix</keyword>
<keyword id="KW-0813">Transport</keyword>
<sequence length="153" mass="17306">MPPLLYRLRSVLADTVAMVIYCFITGMAVEMLLSEMTFQQSLSSRLLSIPVNIVIAWPYGLYRDRIVALLLKWGKNKHGIRNLADLFAYVSFQSPVYAAILWAIGADLSQIVRAVGSNAIISMLMGVVYGYFLEYCRHLFRVPVLNRQRIGSN</sequence>
<reference key="1">
    <citation type="submission" date="2009-06" db="EMBL/GenBank/DDBJ databases">
        <title>Complete sequence of Dickeya dadantii Ech703.</title>
        <authorList>
            <consortium name="US DOE Joint Genome Institute"/>
            <person name="Lucas S."/>
            <person name="Copeland A."/>
            <person name="Lapidus A."/>
            <person name="Glavina del Rio T."/>
            <person name="Dalin E."/>
            <person name="Tice H."/>
            <person name="Bruce D."/>
            <person name="Goodwin L."/>
            <person name="Pitluck S."/>
            <person name="Chertkov O."/>
            <person name="Brettin T."/>
            <person name="Detter J.C."/>
            <person name="Han C."/>
            <person name="Larimer F."/>
            <person name="Land M."/>
            <person name="Hauser L."/>
            <person name="Kyrpides N."/>
            <person name="Mikhailova N."/>
            <person name="Balakrishnan V."/>
            <person name="Glasner J."/>
            <person name="Perna N.T."/>
        </authorList>
    </citation>
    <scope>NUCLEOTIDE SEQUENCE [LARGE SCALE GENOMIC DNA]</scope>
    <source>
        <strain>Ech703</strain>
    </source>
</reference>
<dbReference type="EMBL" id="CP001654">
    <property type="protein sequence ID" value="ACS84448.1"/>
    <property type="molecule type" value="Genomic_DNA"/>
</dbReference>
<dbReference type="RefSeq" id="WP_012764267.1">
    <property type="nucleotide sequence ID" value="NC_012880.1"/>
</dbReference>
<dbReference type="STRING" id="579405.Dd703_0637"/>
<dbReference type="KEGG" id="dda:Dd703_0637"/>
<dbReference type="eggNOG" id="ENOG502ZRFS">
    <property type="taxonomic scope" value="Bacteria"/>
</dbReference>
<dbReference type="HOGENOM" id="CLU_126493_0_0_6"/>
<dbReference type="Proteomes" id="UP000002734">
    <property type="component" value="Chromosome"/>
</dbReference>
<dbReference type="GO" id="GO:0005886">
    <property type="term" value="C:plasma membrane"/>
    <property type="evidence" value="ECO:0007669"/>
    <property type="project" value="UniProtKB-SubCell"/>
</dbReference>
<dbReference type="GO" id="GO:0034639">
    <property type="term" value="F:L-amino acid efflux transmembrane transporter activity"/>
    <property type="evidence" value="ECO:0007669"/>
    <property type="project" value="UniProtKB-UniRule"/>
</dbReference>
<dbReference type="GO" id="GO:0032973">
    <property type="term" value="P:amino acid export across plasma membrane"/>
    <property type="evidence" value="ECO:0007669"/>
    <property type="project" value="UniProtKB-UniRule"/>
</dbReference>
<dbReference type="HAMAP" id="MF_00914">
    <property type="entry name" value="L_Ala_exporter"/>
    <property type="match status" value="1"/>
</dbReference>
<dbReference type="InterPro" id="IPR010574">
    <property type="entry name" value="Ala_export_AlaE"/>
</dbReference>
<dbReference type="Pfam" id="PF06610">
    <property type="entry name" value="AlaE"/>
    <property type="match status" value="1"/>
</dbReference>
<protein>
    <recommendedName>
        <fullName evidence="1">L-alanine exporter AlaE</fullName>
    </recommendedName>
</protein>
<organism>
    <name type="scientific">Musicola paradisiaca (strain Ech703)</name>
    <name type="common">Dickeya paradisiaca</name>
    <name type="synonym">Dickeya dadantii</name>
    <dbReference type="NCBI Taxonomy" id="579405"/>
    <lineage>
        <taxon>Bacteria</taxon>
        <taxon>Pseudomonadati</taxon>
        <taxon>Pseudomonadota</taxon>
        <taxon>Gammaproteobacteria</taxon>
        <taxon>Enterobacterales</taxon>
        <taxon>Pectobacteriaceae</taxon>
        <taxon>Musicola</taxon>
    </lineage>
</organism>
<gene>
    <name evidence="1" type="primary">alaE</name>
    <name type="ordered locus">Dd703_0637</name>
</gene>
<name>ALAE_MUSP7</name>
<comment type="function">
    <text evidence="1">Exports L-alanine.</text>
</comment>
<comment type="subcellular location">
    <subcellularLocation>
        <location evidence="1">Cell inner membrane</location>
        <topology evidence="1">Multi-pass membrane protein</topology>
    </subcellularLocation>
</comment>
<comment type="similarity">
    <text evidence="1">Belongs to the AlaE exporter family.</text>
</comment>